<organism>
    <name type="scientific">Mus musculus</name>
    <name type="common">Mouse</name>
    <dbReference type="NCBI Taxonomy" id="10090"/>
    <lineage>
        <taxon>Eukaryota</taxon>
        <taxon>Metazoa</taxon>
        <taxon>Chordata</taxon>
        <taxon>Craniata</taxon>
        <taxon>Vertebrata</taxon>
        <taxon>Euteleostomi</taxon>
        <taxon>Mammalia</taxon>
        <taxon>Eutheria</taxon>
        <taxon>Euarchontoglires</taxon>
        <taxon>Glires</taxon>
        <taxon>Rodentia</taxon>
        <taxon>Myomorpha</taxon>
        <taxon>Muroidea</taxon>
        <taxon>Muridae</taxon>
        <taxon>Murinae</taxon>
        <taxon>Mus</taxon>
        <taxon>Mus</taxon>
    </lineage>
</organism>
<evidence type="ECO:0000250" key="1">
    <source>
        <dbReference type="UniProtKB" id="P57057"/>
    </source>
</evidence>
<evidence type="ECO:0000255" key="2"/>
<evidence type="ECO:0000256" key="3">
    <source>
        <dbReference type="SAM" id="MobiDB-lite"/>
    </source>
</evidence>
<evidence type="ECO:0000305" key="4"/>
<evidence type="ECO:0000312" key="5">
    <source>
        <dbReference type="MGI" id="MGI:2446181"/>
    </source>
</evidence>
<proteinExistence type="evidence at transcript level"/>
<feature type="chain" id="PRO_0000436067" description="Glucose-6-phosphate exchanger SLC37A1">
    <location>
        <begin position="1"/>
        <end position="531"/>
    </location>
</feature>
<feature type="transmembrane region" description="Helical" evidence="2">
    <location>
        <begin position="18"/>
        <end position="38"/>
    </location>
</feature>
<feature type="transmembrane region" description="Helical" evidence="2">
    <location>
        <begin position="100"/>
        <end position="120"/>
    </location>
</feature>
<feature type="transmembrane region" description="Helical" evidence="2">
    <location>
        <begin position="129"/>
        <end position="149"/>
    </location>
</feature>
<feature type="transmembrane region" description="Helical" evidence="2">
    <location>
        <begin position="157"/>
        <end position="177"/>
    </location>
</feature>
<feature type="transmembrane region" description="Helical" evidence="2">
    <location>
        <begin position="192"/>
        <end position="214"/>
    </location>
</feature>
<feature type="transmembrane region" description="Helical" evidence="2">
    <location>
        <begin position="222"/>
        <end position="242"/>
    </location>
</feature>
<feature type="transmembrane region" description="Helical" evidence="2">
    <location>
        <begin position="332"/>
        <end position="352"/>
    </location>
</feature>
<feature type="transmembrane region" description="Helical" evidence="2">
    <location>
        <begin position="364"/>
        <end position="384"/>
    </location>
</feature>
<feature type="transmembrane region" description="Helical" evidence="2">
    <location>
        <begin position="392"/>
        <end position="412"/>
    </location>
</feature>
<feature type="transmembrane region" description="Helical" evidence="2">
    <location>
        <begin position="419"/>
        <end position="439"/>
    </location>
</feature>
<feature type="transmembrane region" description="Helical" evidence="2">
    <location>
        <begin position="464"/>
        <end position="484"/>
    </location>
</feature>
<feature type="transmembrane region" description="Helical" evidence="2">
    <location>
        <begin position="488"/>
        <end position="508"/>
    </location>
</feature>
<feature type="region of interest" description="Disordered" evidence="3">
    <location>
        <begin position="53"/>
        <end position="72"/>
    </location>
</feature>
<feature type="sequence conflict" description="In Ref. 1; BAE25474." evidence="4" ref="1">
    <original>M</original>
    <variation>T</variation>
    <location>
        <position position="313"/>
    </location>
</feature>
<reference key="1">
    <citation type="journal article" date="2005" name="Science">
        <title>The transcriptional landscape of the mammalian genome.</title>
        <authorList>
            <person name="Carninci P."/>
            <person name="Kasukawa T."/>
            <person name="Katayama S."/>
            <person name="Gough J."/>
            <person name="Frith M.C."/>
            <person name="Maeda N."/>
            <person name="Oyama R."/>
            <person name="Ravasi T."/>
            <person name="Lenhard B."/>
            <person name="Wells C."/>
            <person name="Kodzius R."/>
            <person name="Shimokawa K."/>
            <person name="Bajic V.B."/>
            <person name="Brenner S.E."/>
            <person name="Batalov S."/>
            <person name="Forrest A.R."/>
            <person name="Zavolan M."/>
            <person name="Davis M.J."/>
            <person name="Wilming L.G."/>
            <person name="Aidinis V."/>
            <person name="Allen J.E."/>
            <person name="Ambesi-Impiombato A."/>
            <person name="Apweiler R."/>
            <person name="Aturaliya R.N."/>
            <person name="Bailey T.L."/>
            <person name="Bansal M."/>
            <person name="Baxter L."/>
            <person name="Beisel K.W."/>
            <person name="Bersano T."/>
            <person name="Bono H."/>
            <person name="Chalk A.M."/>
            <person name="Chiu K.P."/>
            <person name="Choudhary V."/>
            <person name="Christoffels A."/>
            <person name="Clutterbuck D.R."/>
            <person name="Crowe M.L."/>
            <person name="Dalla E."/>
            <person name="Dalrymple B.P."/>
            <person name="de Bono B."/>
            <person name="Della Gatta G."/>
            <person name="di Bernardo D."/>
            <person name="Down T."/>
            <person name="Engstrom P."/>
            <person name="Fagiolini M."/>
            <person name="Faulkner G."/>
            <person name="Fletcher C.F."/>
            <person name="Fukushima T."/>
            <person name="Furuno M."/>
            <person name="Futaki S."/>
            <person name="Gariboldi M."/>
            <person name="Georgii-Hemming P."/>
            <person name="Gingeras T.R."/>
            <person name="Gojobori T."/>
            <person name="Green R.E."/>
            <person name="Gustincich S."/>
            <person name="Harbers M."/>
            <person name="Hayashi Y."/>
            <person name="Hensch T.K."/>
            <person name="Hirokawa N."/>
            <person name="Hill D."/>
            <person name="Huminiecki L."/>
            <person name="Iacono M."/>
            <person name="Ikeo K."/>
            <person name="Iwama A."/>
            <person name="Ishikawa T."/>
            <person name="Jakt M."/>
            <person name="Kanapin A."/>
            <person name="Katoh M."/>
            <person name="Kawasawa Y."/>
            <person name="Kelso J."/>
            <person name="Kitamura H."/>
            <person name="Kitano H."/>
            <person name="Kollias G."/>
            <person name="Krishnan S.P."/>
            <person name="Kruger A."/>
            <person name="Kummerfeld S.K."/>
            <person name="Kurochkin I.V."/>
            <person name="Lareau L.F."/>
            <person name="Lazarevic D."/>
            <person name="Lipovich L."/>
            <person name="Liu J."/>
            <person name="Liuni S."/>
            <person name="McWilliam S."/>
            <person name="Madan Babu M."/>
            <person name="Madera M."/>
            <person name="Marchionni L."/>
            <person name="Matsuda H."/>
            <person name="Matsuzawa S."/>
            <person name="Miki H."/>
            <person name="Mignone F."/>
            <person name="Miyake S."/>
            <person name="Morris K."/>
            <person name="Mottagui-Tabar S."/>
            <person name="Mulder N."/>
            <person name="Nakano N."/>
            <person name="Nakauchi H."/>
            <person name="Ng P."/>
            <person name="Nilsson R."/>
            <person name="Nishiguchi S."/>
            <person name="Nishikawa S."/>
            <person name="Nori F."/>
            <person name="Ohara O."/>
            <person name="Okazaki Y."/>
            <person name="Orlando V."/>
            <person name="Pang K.C."/>
            <person name="Pavan W.J."/>
            <person name="Pavesi G."/>
            <person name="Pesole G."/>
            <person name="Petrovsky N."/>
            <person name="Piazza S."/>
            <person name="Reed J."/>
            <person name="Reid J.F."/>
            <person name="Ring B.Z."/>
            <person name="Ringwald M."/>
            <person name="Rost B."/>
            <person name="Ruan Y."/>
            <person name="Salzberg S.L."/>
            <person name="Sandelin A."/>
            <person name="Schneider C."/>
            <person name="Schoenbach C."/>
            <person name="Sekiguchi K."/>
            <person name="Semple C.A."/>
            <person name="Seno S."/>
            <person name="Sessa L."/>
            <person name="Sheng Y."/>
            <person name="Shibata Y."/>
            <person name="Shimada H."/>
            <person name="Shimada K."/>
            <person name="Silva D."/>
            <person name="Sinclair B."/>
            <person name="Sperling S."/>
            <person name="Stupka E."/>
            <person name="Sugiura K."/>
            <person name="Sultana R."/>
            <person name="Takenaka Y."/>
            <person name="Taki K."/>
            <person name="Tammoja K."/>
            <person name="Tan S.L."/>
            <person name="Tang S."/>
            <person name="Taylor M.S."/>
            <person name="Tegner J."/>
            <person name="Teichmann S.A."/>
            <person name="Ueda H.R."/>
            <person name="van Nimwegen E."/>
            <person name="Verardo R."/>
            <person name="Wei C.L."/>
            <person name="Yagi K."/>
            <person name="Yamanishi H."/>
            <person name="Zabarovsky E."/>
            <person name="Zhu S."/>
            <person name="Zimmer A."/>
            <person name="Hide W."/>
            <person name="Bult C."/>
            <person name="Grimmond S.M."/>
            <person name="Teasdale R.D."/>
            <person name="Liu E.T."/>
            <person name="Brusic V."/>
            <person name="Quackenbush J."/>
            <person name="Wahlestedt C."/>
            <person name="Mattick J.S."/>
            <person name="Hume D.A."/>
            <person name="Kai C."/>
            <person name="Sasaki D."/>
            <person name="Tomaru Y."/>
            <person name="Fukuda S."/>
            <person name="Kanamori-Katayama M."/>
            <person name="Suzuki M."/>
            <person name="Aoki J."/>
            <person name="Arakawa T."/>
            <person name="Iida J."/>
            <person name="Imamura K."/>
            <person name="Itoh M."/>
            <person name="Kato T."/>
            <person name="Kawaji H."/>
            <person name="Kawagashira N."/>
            <person name="Kawashima T."/>
            <person name="Kojima M."/>
            <person name="Kondo S."/>
            <person name="Konno H."/>
            <person name="Nakano K."/>
            <person name="Ninomiya N."/>
            <person name="Nishio T."/>
            <person name="Okada M."/>
            <person name="Plessy C."/>
            <person name="Shibata K."/>
            <person name="Shiraki T."/>
            <person name="Suzuki S."/>
            <person name="Tagami M."/>
            <person name="Waki K."/>
            <person name="Watahiki A."/>
            <person name="Okamura-Oho Y."/>
            <person name="Suzuki H."/>
            <person name="Kawai J."/>
            <person name="Hayashizaki Y."/>
        </authorList>
    </citation>
    <scope>NUCLEOTIDE SEQUENCE [LARGE SCALE MRNA]</scope>
    <source>
        <strain>C57BL/6J</strain>
        <tissue>Cecum</tissue>
        <tissue>Spleen</tissue>
        <tissue>Thymus</tissue>
    </source>
</reference>
<reference key="2">
    <citation type="journal article" date="2009" name="PLoS Biol.">
        <title>Lineage-specific biology revealed by a finished genome assembly of the mouse.</title>
        <authorList>
            <person name="Church D.M."/>
            <person name="Goodstadt L."/>
            <person name="Hillier L.W."/>
            <person name="Zody M.C."/>
            <person name="Goldstein S."/>
            <person name="She X."/>
            <person name="Bult C.J."/>
            <person name="Agarwala R."/>
            <person name="Cherry J.L."/>
            <person name="DiCuccio M."/>
            <person name="Hlavina W."/>
            <person name="Kapustin Y."/>
            <person name="Meric P."/>
            <person name="Maglott D."/>
            <person name="Birtle Z."/>
            <person name="Marques A.C."/>
            <person name="Graves T."/>
            <person name="Zhou S."/>
            <person name="Teague B."/>
            <person name="Potamousis K."/>
            <person name="Churas C."/>
            <person name="Place M."/>
            <person name="Herschleb J."/>
            <person name="Runnheim R."/>
            <person name="Forrest D."/>
            <person name="Amos-Landgraf J."/>
            <person name="Schwartz D.C."/>
            <person name="Cheng Z."/>
            <person name="Lindblad-Toh K."/>
            <person name="Eichler E.E."/>
            <person name="Ponting C.P."/>
        </authorList>
    </citation>
    <scope>NUCLEOTIDE SEQUENCE [LARGE SCALE GENOMIC DNA]</scope>
    <source>
        <strain>C57BL/6J</strain>
    </source>
</reference>
<reference key="3">
    <citation type="submission" date="2005-09" db="EMBL/GenBank/DDBJ databases">
        <authorList>
            <person name="Mural R.J."/>
            <person name="Adams M.D."/>
            <person name="Myers E.W."/>
            <person name="Smith H.O."/>
            <person name="Venter J.C."/>
        </authorList>
    </citation>
    <scope>NUCLEOTIDE SEQUENCE [LARGE SCALE GENOMIC DNA]</scope>
</reference>
<reference key="4">
    <citation type="journal article" date="2004" name="Genome Res.">
        <title>The status, quality, and expansion of the NIH full-length cDNA project: the Mammalian Gene Collection (MGC).</title>
        <authorList>
            <consortium name="The MGC Project Team"/>
        </authorList>
    </citation>
    <scope>NUCLEOTIDE SEQUENCE [LARGE SCALE MRNA]</scope>
    <source>
        <tissue>Mammary tumor</tissue>
    </source>
</reference>
<gene>
    <name evidence="5" type="primary">Slc37a1</name>
</gene>
<name>G6PT2_MOUSE</name>
<dbReference type="EMBL" id="AK033656">
    <property type="protein sequence ID" value="BAC28411.1"/>
    <property type="molecule type" value="mRNA"/>
</dbReference>
<dbReference type="EMBL" id="AK143636">
    <property type="protein sequence ID" value="BAE25474.1"/>
    <property type="molecule type" value="mRNA"/>
</dbReference>
<dbReference type="EMBL" id="AK153706">
    <property type="protein sequence ID" value="BAE32150.1"/>
    <property type="molecule type" value="mRNA"/>
</dbReference>
<dbReference type="EMBL" id="AC154652">
    <property type="status" value="NOT_ANNOTATED_CDS"/>
    <property type="molecule type" value="Genomic_DNA"/>
</dbReference>
<dbReference type="EMBL" id="CH466640">
    <property type="protein sequence ID" value="EDL40361.1"/>
    <property type="molecule type" value="Genomic_DNA"/>
</dbReference>
<dbReference type="EMBL" id="CH466640">
    <property type="protein sequence ID" value="EDL40362.1"/>
    <property type="molecule type" value="Genomic_DNA"/>
</dbReference>
<dbReference type="EMBL" id="BC027294">
    <property type="protein sequence ID" value="AAH27294.1"/>
    <property type="molecule type" value="mRNA"/>
</dbReference>
<dbReference type="CCDS" id="CCDS37548.1"/>
<dbReference type="RefSeq" id="NP_001229356.1">
    <property type="nucleotide sequence ID" value="NM_001242427.1"/>
</dbReference>
<dbReference type="RefSeq" id="NP_694702.1">
    <property type="nucleotide sequence ID" value="NM_153062.2"/>
</dbReference>
<dbReference type="RefSeq" id="XP_006524160.1">
    <property type="nucleotide sequence ID" value="XM_006524097.5"/>
</dbReference>
<dbReference type="RefSeq" id="XP_011244698.1">
    <property type="nucleotide sequence ID" value="XM_011246396.4"/>
</dbReference>
<dbReference type="RefSeq" id="XP_036016419.1">
    <property type="nucleotide sequence ID" value="XM_036160526.1"/>
</dbReference>
<dbReference type="FunCoup" id="Q8R070">
    <property type="interactions" value="484"/>
</dbReference>
<dbReference type="STRING" id="10090.ENSMUSP00000128223"/>
<dbReference type="PhosphoSitePlus" id="Q8R070"/>
<dbReference type="SwissPalm" id="Q8R070"/>
<dbReference type="PaxDb" id="10090-ENSMUSP00000128223"/>
<dbReference type="ProteomicsDB" id="265723"/>
<dbReference type="Antibodypedia" id="23842">
    <property type="antibodies" value="73 antibodies from 18 providers"/>
</dbReference>
<dbReference type="DNASU" id="224674"/>
<dbReference type="Ensembl" id="ENSMUST00000165149.3">
    <property type="protein sequence ID" value="ENSMUSP00000128223.2"/>
    <property type="gene ID" value="ENSMUSG00000024036.17"/>
</dbReference>
<dbReference type="Ensembl" id="ENSMUST00000171233.9">
    <property type="protein sequence ID" value="ENSMUSP00000126111.2"/>
    <property type="gene ID" value="ENSMUSG00000024036.17"/>
</dbReference>
<dbReference type="GeneID" id="224674"/>
<dbReference type="KEGG" id="mmu:224674"/>
<dbReference type="UCSC" id="uc008buw.1">
    <property type="organism name" value="mouse"/>
</dbReference>
<dbReference type="AGR" id="MGI:2446181"/>
<dbReference type="CTD" id="54020"/>
<dbReference type="MGI" id="MGI:2446181">
    <property type="gene designation" value="Slc37a1"/>
</dbReference>
<dbReference type="VEuPathDB" id="HostDB:ENSMUSG00000024036"/>
<dbReference type="eggNOG" id="KOG2533">
    <property type="taxonomic scope" value="Eukaryota"/>
</dbReference>
<dbReference type="GeneTree" id="ENSGT00940000159245"/>
<dbReference type="HOGENOM" id="CLU_001265_31_6_1"/>
<dbReference type="InParanoid" id="Q8R070"/>
<dbReference type="OMA" id="WRIQIFA"/>
<dbReference type="OrthoDB" id="3639251at2759"/>
<dbReference type="PhylomeDB" id="Q8R070"/>
<dbReference type="TreeFam" id="TF314991"/>
<dbReference type="Reactome" id="R-MMU-70263">
    <property type="pathway name" value="Gluconeogenesis"/>
</dbReference>
<dbReference type="BioGRID-ORCS" id="224674">
    <property type="hits" value="4 hits in 78 CRISPR screens"/>
</dbReference>
<dbReference type="ChiTaRS" id="Slc37a2">
    <property type="organism name" value="mouse"/>
</dbReference>
<dbReference type="PRO" id="PR:Q8R070"/>
<dbReference type="Proteomes" id="UP000000589">
    <property type="component" value="Chromosome 17"/>
</dbReference>
<dbReference type="RNAct" id="Q8R070">
    <property type="molecule type" value="protein"/>
</dbReference>
<dbReference type="Bgee" id="ENSMUSG00000024036">
    <property type="expression patterns" value="Expressed in colon and 123 other cell types or tissues"/>
</dbReference>
<dbReference type="ExpressionAtlas" id="Q8R070">
    <property type="expression patterns" value="baseline and differential"/>
</dbReference>
<dbReference type="GO" id="GO:0005789">
    <property type="term" value="C:endoplasmic reticulum membrane"/>
    <property type="evidence" value="ECO:0000250"/>
    <property type="project" value="UniProtKB"/>
</dbReference>
<dbReference type="GO" id="GO:0061513">
    <property type="term" value="F:glucose 6-phosphate:phosphate antiporter activity"/>
    <property type="evidence" value="ECO:0000250"/>
    <property type="project" value="UniProtKB"/>
</dbReference>
<dbReference type="GO" id="GO:0015760">
    <property type="term" value="P:glucose-6-phosphate transport"/>
    <property type="evidence" value="ECO:0000250"/>
    <property type="project" value="UniProtKB"/>
</dbReference>
<dbReference type="GO" id="GO:0035435">
    <property type="term" value="P:phosphate ion transmembrane transport"/>
    <property type="evidence" value="ECO:0000250"/>
    <property type="project" value="UniProtKB"/>
</dbReference>
<dbReference type="CDD" id="cd17344">
    <property type="entry name" value="MFS_SLC37A1_2"/>
    <property type="match status" value="1"/>
</dbReference>
<dbReference type="FunFam" id="1.20.1250.20:FF:000050">
    <property type="entry name" value="glucose-6-phosphate exchanger SLC37A2 isoform X1"/>
    <property type="match status" value="1"/>
</dbReference>
<dbReference type="FunFam" id="1.20.1250.20:FF:000028">
    <property type="entry name" value="Sugar phosphate exchanger 3 isoform 1"/>
    <property type="match status" value="1"/>
</dbReference>
<dbReference type="Gene3D" id="1.20.1250.20">
    <property type="entry name" value="MFS general substrate transporter like domains"/>
    <property type="match status" value="2"/>
</dbReference>
<dbReference type="InterPro" id="IPR011701">
    <property type="entry name" value="MFS"/>
</dbReference>
<dbReference type="InterPro" id="IPR020846">
    <property type="entry name" value="MFS_dom"/>
</dbReference>
<dbReference type="InterPro" id="IPR036259">
    <property type="entry name" value="MFS_trans_sf"/>
</dbReference>
<dbReference type="InterPro" id="IPR044740">
    <property type="entry name" value="SLC37A1_2"/>
</dbReference>
<dbReference type="InterPro" id="IPR000849">
    <property type="entry name" value="Sugar_P_transporter"/>
</dbReference>
<dbReference type="PANTHER" id="PTHR43184:SF11">
    <property type="entry name" value="GLUCOSE-6-PHOSPHATE EXCHANGER SLC37A1"/>
    <property type="match status" value="1"/>
</dbReference>
<dbReference type="PANTHER" id="PTHR43184">
    <property type="entry name" value="MAJOR FACILITATOR SUPERFAMILY TRANSPORTER 16, ISOFORM B"/>
    <property type="match status" value="1"/>
</dbReference>
<dbReference type="Pfam" id="PF07690">
    <property type="entry name" value="MFS_1"/>
    <property type="match status" value="1"/>
</dbReference>
<dbReference type="PIRSF" id="PIRSF002808">
    <property type="entry name" value="Hexose_phosphate_transp"/>
    <property type="match status" value="1"/>
</dbReference>
<dbReference type="SUPFAM" id="SSF103473">
    <property type="entry name" value="MFS general substrate transporter"/>
    <property type="match status" value="1"/>
</dbReference>
<dbReference type="PROSITE" id="PS50850">
    <property type="entry name" value="MFS"/>
    <property type="match status" value="1"/>
</dbReference>
<comment type="function">
    <text evidence="1">Inorganic phosphate and glucose-6-phosphate antiporter. May transport cytoplasmic glucose-6-phosphate into the lumen of the endoplasmic reticulum and translocate inorganic phosphate into the opposite direction. Independent of a lumenal glucose-6-phosphatase. May not play a role in homeostatic regulation of blood glucose levels.</text>
</comment>
<comment type="catalytic activity">
    <reaction evidence="1">
        <text>D-glucose 6-phosphate(in) + phosphate(out) = D-glucose 6-phosphate(out) + phosphate(in)</text>
        <dbReference type="Rhea" id="RHEA:71535"/>
        <dbReference type="ChEBI" id="CHEBI:43474"/>
        <dbReference type="ChEBI" id="CHEBI:61548"/>
    </reaction>
</comment>
<comment type="activity regulation">
    <text evidence="1">Inhibited by vanadate but not by chlorogenic acid.</text>
</comment>
<comment type="subcellular location">
    <subcellularLocation>
        <location evidence="1">Endoplasmic reticulum membrane</location>
        <topology evidence="2">Multi-pass membrane protein</topology>
    </subcellularLocation>
</comment>
<comment type="similarity">
    <text evidence="4">Belongs to the major facilitator superfamily. Organophosphate:Pi antiporter (OPA) (TC 2.A.1.4) family.</text>
</comment>
<sequence>MALLPVGIRFIISFSRDQWYRAFIFMLTFLLYASFHLSRKPISIVKGELHKQCTAGDGPESPFSDPSSSTRHGPTHWLLNNETDCGWAPFDKNNYQQLLGALDYAFLCAYAIGMYLSGIIGERLPIRYYLTFGMLASGAFTALFGLGYFYNIHSLGFYVVTQIINGLVQTTGWPSVVTCLSNWFGKGRRGLIMGIWNSHTSVGNILGSLIAGYWVSTCWGLSFIVPGAIVAAMGIVCFLFLIEHPKDVKCSSTLPTHPRASENGINRFRLQKQTTYSEKNGPLDPELQCLLLSDGKNPLHPSHIVVLPADGNMAAISFTGALRIPGVIEFSLCLLFAKLVSYTFLFWLPLYITSVDHLDAKKAGELSTLFDVGGIFGGILAGVISDRLEKRASTCGLMLLLAAPTLYVFSSVSRMGLEATIAMLLLSGALVSGPYALITTAVSADLGTHKSLKGNSHALSTVTAIIDGTGSVGAALGPLLAGLISPSGWSNVFYMLMFADACALLFLVRLIHKELSCPGPAAGIQAPLKEH</sequence>
<protein>
    <recommendedName>
        <fullName evidence="4">Glucose-6-phosphate exchanger SLC37A1</fullName>
    </recommendedName>
    <alternativeName>
        <fullName evidence="5">Solute carrier family 37 member 1</fullName>
    </alternativeName>
</protein>
<keyword id="KW-0050">Antiport</keyword>
<keyword id="KW-0256">Endoplasmic reticulum</keyword>
<keyword id="KW-0472">Membrane</keyword>
<keyword id="KW-1185">Reference proteome</keyword>
<keyword id="KW-0762">Sugar transport</keyword>
<keyword id="KW-0812">Transmembrane</keyword>
<keyword id="KW-1133">Transmembrane helix</keyword>
<keyword id="KW-0813">Transport</keyword>
<accession>Q8R070</accession>
<accession>Q3UPC2</accession>